<comment type="similarity">
    <text evidence="1">Belongs to the UPF0250 family.</text>
</comment>
<accession>B7NLZ0</accession>
<reference key="1">
    <citation type="journal article" date="2009" name="PLoS Genet.">
        <title>Organised genome dynamics in the Escherichia coli species results in highly diverse adaptive paths.</title>
        <authorList>
            <person name="Touchon M."/>
            <person name="Hoede C."/>
            <person name="Tenaillon O."/>
            <person name="Barbe V."/>
            <person name="Baeriswyl S."/>
            <person name="Bidet P."/>
            <person name="Bingen E."/>
            <person name="Bonacorsi S."/>
            <person name="Bouchier C."/>
            <person name="Bouvet O."/>
            <person name="Calteau A."/>
            <person name="Chiapello H."/>
            <person name="Clermont O."/>
            <person name="Cruveiller S."/>
            <person name="Danchin A."/>
            <person name="Diard M."/>
            <person name="Dossat C."/>
            <person name="Karoui M.E."/>
            <person name="Frapy E."/>
            <person name="Garry L."/>
            <person name="Ghigo J.M."/>
            <person name="Gilles A.M."/>
            <person name="Johnson J."/>
            <person name="Le Bouguenec C."/>
            <person name="Lescat M."/>
            <person name="Mangenot S."/>
            <person name="Martinez-Jehanne V."/>
            <person name="Matic I."/>
            <person name="Nassif X."/>
            <person name="Oztas S."/>
            <person name="Petit M.A."/>
            <person name="Pichon C."/>
            <person name="Rouy Z."/>
            <person name="Ruf C.S."/>
            <person name="Schneider D."/>
            <person name="Tourret J."/>
            <person name="Vacherie B."/>
            <person name="Vallenet D."/>
            <person name="Medigue C."/>
            <person name="Rocha E.P.C."/>
            <person name="Denamur E."/>
        </authorList>
    </citation>
    <scope>NUCLEOTIDE SEQUENCE [LARGE SCALE GENOMIC DNA]</scope>
    <source>
        <strain>IAI39 / ExPEC</strain>
    </source>
</reference>
<protein>
    <recommendedName>
        <fullName evidence="1">UPF0250 protein YbeD</fullName>
    </recommendedName>
</protein>
<organism>
    <name type="scientific">Escherichia coli O7:K1 (strain IAI39 / ExPEC)</name>
    <dbReference type="NCBI Taxonomy" id="585057"/>
    <lineage>
        <taxon>Bacteria</taxon>
        <taxon>Pseudomonadati</taxon>
        <taxon>Pseudomonadota</taxon>
        <taxon>Gammaproteobacteria</taxon>
        <taxon>Enterobacterales</taxon>
        <taxon>Enterobacteriaceae</taxon>
        <taxon>Escherichia</taxon>
    </lineage>
</organism>
<proteinExistence type="inferred from homology"/>
<evidence type="ECO:0000255" key="1">
    <source>
        <dbReference type="HAMAP-Rule" id="MF_00659"/>
    </source>
</evidence>
<sequence>MKTKLNELLEFPTPFTYKVMGQALPELVDQVVEVVQRHAPGDYTPTVKPSSKGNYHSVSITINATHIEQVETLYEELGKIDIVRMVL</sequence>
<feature type="chain" id="PRO_1000131241" description="UPF0250 protein YbeD">
    <location>
        <begin position="1"/>
        <end position="87"/>
    </location>
</feature>
<name>YBED_ECO7I</name>
<gene>
    <name evidence="1" type="primary">ybeD</name>
    <name type="ordered locus">ECIAI39_0606</name>
</gene>
<dbReference type="EMBL" id="CU928164">
    <property type="protein sequence ID" value="CAR16743.1"/>
    <property type="molecule type" value="Genomic_DNA"/>
</dbReference>
<dbReference type="RefSeq" id="WP_000850550.1">
    <property type="nucleotide sequence ID" value="NC_011750.1"/>
</dbReference>
<dbReference type="RefSeq" id="YP_002406632.1">
    <property type="nucleotide sequence ID" value="NC_011750.1"/>
</dbReference>
<dbReference type="SMR" id="B7NLZ0"/>
<dbReference type="STRING" id="585057.ECIAI39_0606"/>
<dbReference type="GeneID" id="93776851"/>
<dbReference type="KEGG" id="ect:ECIAI39_0606"/>
<dbReference type="PATRIC" id="fig|585057.6.peg.644"/>
<dbReference type="HOGENOM" id="CLU_161438_2_1_6"/>
<dbReference type="Proteomes" id="UP000000749">
    <property type="component" value="Chromosome"/>
</dbReference>
<dbReference type="GO" id="GO:0005829">
    <property type="term" value="C:cytosol"/>
    <property type="evidence" value="ECO:0007669"/>
    <property type="project" value="TreeGrafter"/>
</dbReference>
<dbReference type="FunFam" id="3.30.70.260:FF:000002">
    <property type="entry name" value="UPF0250 protein YbeD"/>
    <property type="match status" value="1"/>
</dbReference>
<dbReference type="Gene3D" id="3.30.70.260">
    <property type="match status" value="1"/>
</dbReference>
<dbReference type="HAMAP" id="MF_00659">
    <property type="entry name" value="UPF0250"/>
    <property type="match status" value="1"/>
</dbReference>
<dbReference type="InterPro" id="IPR007454">
    <property type="entry name" value="UPF0250_YbeD-like"/>
</dbReference>
<dbReference type="InterPro" id="IPR027471">
    <property type="entry name" value="YbeD-like_sf"/>
</dbReference>
<dbReference type="NCBIfam" id="NF003447">
    <property type="entry name" value="PRK04998.1"/>
    <property type="match status" value="1"/>
</dbReference>
<dbReference type="PANTHER" id="PTHR38036">
    <property type="entry name" value="UPF0250 PROTEIN YBED"/>
    <property type="match status" value="1"/>
</dbReference>
<dbReference type="PANTHER" id="PTHR38036:SF1">
    <property type="entry name" value="UPF0250 PROTEIN YBED"/>
    <property type="match status" value="1"/>
</dbReference>
<dbReference type="Pfam" id="PF04359">
    <property type="entry name" value="DUF493"/>
    <property type="match status" value="1"/>
</dbReference>
<dbReference type="SUPFAM" id="SSF117991">
    <property type="entry name" value="YbeD/HP0495-like"/>
    <property type="match status" value="1"/>
</dbReference>